<proteinExistence type="inferred from homology"/>
<name>PRM1_EREGS</name>
<reference key="1">
    <citation type="journal article" date="2004" name="Science">
        <title>The Ashbya gossypii genome as a tool for mapping the ancient Saccharomyces cerevisiae genome.</title>
        <authorList>
            <person name="Dietrich F.S."/>
            <person name="Voegeli S."/>
            <person name="Brachat S."/>
            <person name="Lerch A."/>
            <person name="Gates K."/>
            <person name="Steiner S."/>
            <person name="Mohr C."/>
            <person name="Poehlmann R."/>
            <person name="Luedi P."/>
            <person name="Choi S."/>
            <person name="Wing R.A."/>
            <person name="Flavier A."/>
            <person name="Gaffney T.D."/>
            <person name="Philippsen P."/>
        </authorList>
    </citation>
    <scope>NUCLEOTIDE SEQUENCE [LARGE SCALE GENOMIC DNA]</scope>
    <source>
        <strain>ATCC 10895 / CBS 109.51 / FGSC 9923 / NRRL Y-1056</strain>
    </source>
</reference>
<reference key="2">
    <citation type="journal article" date="2013" name="G3 (Bethesda)">
        <title>Genomes of Ashbya fungi isolated from insects reveal four mating-type loci, numerous translocations, lack of transposons, and distinct gene duplications.</title>
        <authorList>
            <person name="Dietrich F.S."/>
            <person name="Voegeli S."/>
            <person name="Kuo S."/>
            <person name="Philippsen P."/>
        </authorList>
    </citation>
    <scope>GENOME REANNOTATION</scope>
    <source>
        <strain>ATCC 10895 / CBS 109.51 / FGSC 9923 / NRRL Y-1056</strain>
    </source>
</reference>
<gene>
    <name type="primary">PRM1</name>
    <name type="ordered locus">AFR685C</name>
</gene>
<protein>
    <recommendedName>
        <fullName>Plasma membrane fusion protein PRM1</fullName>
    </recommendedName>
</protein>
<keyword id="KW-1003">Cell membrane</keyword>
<keyword id="KW-0184">Conjugation</keyword>
<keyword id="KW-0325">Glycoprotein</keyword>
<keyword id="KW-0472">Membrane</keyword>
<keyword id="KW-1185">Reference proteome</keyword>
<keyword id="KW-0812">Transmembrane</keyword>
<keyword id="KW-1133">Transmembrane helix</keyword>
<feature type="chain" id="PRO_0000337266" description="Plasma membrane fusion protein PRM1">
    <location>
        <begin position="1"/>
        <end position="643"/>
    </location>
</feature>
<feature type="topological domain" description="Extracellular" evidence="1">
    <location>
        <begin position="1"/>
        <end position="16"/>
    </location>
</feature>
<feature type="transmembrane region" description="Helical" evidence="2">
    <location>
        <begin position="17"/>
        <end position="37"/>
    </location>
</feature>
<feature type="topological domain" description="Cytoplasmic" evidence="1">
    <location>
        <begin position="38"/>
        <end position="104"/>
    </location>
</feature>
<feature type="transmembrane region" description="Helical" evidence="2">
    <location>
        <begin position="105"/>
        <end position="125"/>
    </location>
</feature>
<feature type="topological domain" description="Extracellular" evidence="1">
    <location>
        <begin position="126"/>
        <end position="296"/>
    </location>
</feature>
<feature type="transmembrane region" description="Helical" evidence="2">
    <location>
        <begin position="297"/>
        <end position="317"/>
    </location>
</feature>
<feature type="topological domain" description="Cytoplasmic" evidence="1">
    <location>
        <begin position="318"/>
        <end position="410"/>
    </location>
</feature>
<feature type="transmembrane region" description="Helical" evidence="2">
    <location>
        <begin position="411"/>
        <end position="431"/>
    </location>
</feature>
<feature type="topological domain" description="Extracellular" evidence="1">
    <location>
        <begin position="432"/>
        <end position="608"/>
    </location>
</feature>
<feature type="transmembrane region" description="Helical" evidence="2">
    <location>
        <begin position="609"/>
        <end position="629"/>
    </location>
</feature>
<feature type="topological domain" description="Cytoplasmic" evidence="1">
    <location>
        <begin position="630"/>
        <end position="643"/>
    </location>
</feature>
<feature type="glycosylation site" description="N-linked (GlcNAc...) asparagine" evidence="2">
    <location>
        <position position="135"/>
    </location>
</feature>
<feature type="glycosylation site" description="N-linked (GlcNAc...) asparagine" evidence="2">
    <location>
        <position position="145"/>
    </location>
</feature>
<feature type="glycosylation site" description="N-linked (GlcNAc...) asparagine" evidence="2">
    <location>
        <position position="198"/>
    </location>
</feature>
<feature type="glycosylation site" description="N-linked (GlcNAc...) asparagine" evidence="2">
    <location>
        <position position="232"/>
    </location>
</feature>
<feature type="glycosylation site" description="N-linked (GlcNAc...) asparagine" evidence="2">
    <location>
        <position position="253"/>
    </location>
</feature>
<feature type="glycosylation site" description="N-linked (GlcNAc...) asparagine" evidence="2">
    <location>
        <position position="474"/>
    </location>
</feature>
<feature type="glycosylation site" description="N-linked (GlcNAc...) asparagine" evidence="2">
    <location>
        <position position="496"/>
    </location>
</feature>
<evidence type="ECO:0000250" key="1"/>
<evidence type="ECO:0000255" key="2"/>
<evidence type="ECO:0000305" key="3"/>
<sequence>MYATQPYLELRERLSQIWINRYTLLLMLCMVKILLFTSSLRFSLNNSKVHVLEECSNIEHYYNILRNGTPHYMGKMGNYLVAHALEATVESLLALLTSLATVVEVVAHFMIELWLGTYACLLFSAAHGAVEVATNVTEKVIGVANKTLIAAANELDNGLDGLSKVLNKIIETGTKVSHLFKDDDEEHASPEGQFKKINLTIASLRTVKIPESVNDKLRSLAEKTPDFEDVKNKTKGLVSIPFQTLKNEINGINATSMLKNRKLMSVPPIDMGDAADGVCSANRDGIESVYRNLNSALIYSLVATAVSLAIVALLCLIPAAWHEYRQWERLSALRDHERTVDCKDPFADTHSSASASTASSTRCDVIQNYQGVFHRAPTLIGEWVARHTAHTQEGALRIQWLLAYVLSPRALVPLALGLAGVLVCGCQFLIIHALRIQLASTSTRDSLQRLETDTAGLVAHDLSRWADSTNAYINGTEASVNAGLLGWVTTATTALNTTVAALLADIDSTVDRAFADTPLHRPMVTVVSCVIGNKLRAIEAGLTWTHDHVRIALPRIHTARLRDAVAEPDLPTHPAYTAVLQSLSDRLRHSVDRVLHQCCAAVRIELYVSLALLGLWILQTPLGLAMLLFKSHCRRRNLRRRVP</sequence>
<accession>Q751Z0</accession>
<organism>
    <name type="scientific">Eremothecium gossypii (strain ATCC 10895 / CBS 109.51 / FGSC 9923 / NRRL Y-1056)</name>
    <name type="common">Yeast</name>
    <name type="synonym">Ashbya gossypii</name>
    <dbReference type="NCBI Taxonomy" id="284811"/>
    <lineage>
        <taxon>Eukaryota</taxon>
        <taxon>Fungi</taxon>
        <taxon>Dikarya</taxon>
        <taxon>Ascomycota</taxon>
        <taxon>Saccharomycotina</taxon>
        <taxon>Saccharomycetes</taxon>
        <taxon>Saccharomycetales</taxon>
        <taxon>Saccharomycetaceae</taxon>
        <taxon>Eremothecium</taxon>
    </lineage>
</organism>
<dbReference type="EMBL" id="AE016819">
    <property type="protein sequence ID" value="AAS54057.1"/>
    <property type="molecule type" value="Genomic_DNA"/>
</dbReference>
<dbReference type="RefSeq" id="NP_986233.1">
    <property type="nucleotide sequence ID" value="NM_212369.1"/>
</dbReference>
<dbReference type="SMR" id="Q751Z0"/>
<dbReference type="FunCoup" id="Q751Z0">
    <property type="interactions" value="53"/>
</dbReference>
<dbReference type="STRING" id="284811.Q751Z0"/>
<dbReference type="GlyCosmos" id="Q751Z0">
    <property type="glycosylation" value="7 sites, No reported glycans"/>
</dbReference>
<dbReference type="EnsemblFungi" id="AAS54057">
    <property type="protein sequence ID" value="AAS54057"/>
    <property type="gene ID" value="AGOS_AFR685C"/>
</dbReference>
<dbReference type="GeneID" id="4622522"/>
<dbReference type="KEGG" id="ago:AGOS_AFR685C"/>
<dbReference type="eggNOG" id="ENOG502QRP5">
    <property type="taxonomic scope" value="Eukaryota"/>
</dbReference>
<dbReference type="HOGENOM" id="CLU_010191_1_0_1"/>
<dbReference type="InParanoid" id="Q751Z0"/>
<dbReference type="OMA" id="NVFGWVN"/>
<dbReference type="OrthoDB" id="5356111at2759"/>
<dbReference type="Proteomes" id="UP000000591">
    <property type="component" value="Chromosome VI"/>
</dbReference>
<dbReference type="GO" id="GO:0043332">
    <property type="term" value="C:mating projection tip"/>
    <property type="evidence" value="ECO:0000318"/>
    <property type="project" value="GO_Central"/>
</dbReference>
<dbReference type="GO" id="GO:0005886">
    <property type="term" value="C:plasma membrane"/>
    <property type="evidence" value="ECO:0007669"/>
    <property type="project" value="UniProtKB-SubCell"/>
</dbReference>
<dbReference type="GO" id="GO:0032220">
    <property type="term" value="P:plasma membrane fusion involved in cytogamy"/>
    <property type="evidence" value="ECO:0000318"/>
    <property type="project" value="GO_Central"/>
</dbReference>
<dbReference type="InterPro" id="IPR026777">
    <property type="entry name" value="PRM1"/>
</dbReference>
<dbReference type="PANTHER" id="PTHR31030">
    <property type="entry name" value="PLASMA MEMBRANE FUSION PROTEIN PRM1"/>
    <property type="match status" value="1"/>
</dbReference>
<dbReference type="PANTHER" id="PTHR31030:SF1">
    <property type="entry name" value="PLASMA MEMBRANE FUSION PROTEIN PRM1"/>
    <property type="match status" value="1"/>
</dbReference>
<comment type="function">
    <text evidence="1">Involved in cell fusion during mating by stabilizing the plasma membrane fusion event.</text>
</comment>
<comment type="subcellular location">
    <subcellularLocation>
        <location evidence="1">Cell membrane</location>
        <topology evidence="1">Multi-pass membrane protein</topology>
    </subcellularLocation>
</comment>
<comment type="similarity">
    <text evidence="3">Belongs to the PRM1 family.</text>
</comment>